<protein>
    <recommendedName>
        <fullName evidence="1">N-acetyl-gamma-glutamyl-phosphate reductase</fullName>
        <shortName evidence="1">AGPR</shortName>
        <ecNumber evidence="1">1.2.1.38</ecNumber>
    </recommendedName>
    <alternativeName>
        <fullName evidence="1">N-acetyl-glutamate semialdehyde dehydrogenase</fullName>
        <shortName evidence="1">NAGSA dehydrogenase</shortName>
    </alternativeName>
</protein>
<sequence length="345" mass="38545">MKVAIIGATGYGGIELIRLLEQHPYFSIASLHSFSQVGECITNVYPHFQNVLVHTLQEIDAEEIVKEAEIVFLATPAGVSAELTPKLLAVGLKVIDLSGDFRMKDPFIYEQWYKRAAAKEEILSKAVYGLSEWKRSEVQNANLIANPGCFATAALLATLPLVRSGIIEEDSIIIDAKSGVSGAGKTPTTMTHFPELYDNLRIYKVNEHQHVPEIEQMLAEWNRETKPITFSTHLIPISRGIMVTLYAKVKREMEIEQLQKLYEETYEQSPFIRIRLQGEFPSPKEVRGSNYCDMGIAYDERTGRVTVVSVIDNMMKGAAGQAIQNANIIAGLEETTGLQHMPLYL</sequence>
<feature type="chain" id="PRO_1000123232" description="N-acetyl-gamma-glutamyl-phosphate reductase">
    <location>
        <begin position="1"/>
        <end position="345"/>
    </location>
</feature>
<feature type="active site" evidence="1">
    <location>
        <position position="149"/>
    </location>
</feature>
<organism>
    <name type="scientific">Bacillus cereus (strain Q1)</name>
    <dbReference type="NCBI Taxonomy" id="361100"/>
    <lineage>
        <taxon>Bacteria</taxon>
        <taxon>Bacillati</taxon>
        <taxon>Bacillota</taxon>
        <taxon>Bacilli</taxon>
        <taxon>Bacillales</taxon>
        <taxon>Bacillaceae</taxon>
        <taxon>Bacillus</taxon>
        <taxon>Bacillus cereus group</taxon>
    </lineage>
</organism>
<name>ARGC_BACCQ</name>
<comment type="function">
    <text evidence="1">Catalyzes the NADPH-dependent reduction of N-acetyl-5-glutamyl phosphate to yield N-acetyl-L-glutamate 5-semialdehyde.</text>
</comment>
<comment type="catalytic activity">
    <reaction evidence="1">
        <text>N-acetyl-L-glutamate 5-semialdehyde + phosphate + NADP(+) = N-acetyl-L-glutamyl 5-phosphate + NADPH + H(+)</text>
        <dbReference type="Rhea" id="RHEA:21588"/>
        <dbReference type="ChEBI" id="CHEBI:15378"/>
        <dbReference type="ChEBI" id="CHEBI:29123"/>
        <dbReference type="ChEBI" id="CHEBI:43474"/>
        <dbReference type="ChEBI" id="CHEBI:57783"/>
        <dbReference type="ChEBI" id="CHEBI:57936"/>
        <dbReference type="ChEBI" id="CHEBI:58349"/>
        <dbReference type="EC" id="1.2.1.38"/>
    </reaction>
</comment>
<comment type="pathway">
    <text evidence="1">Amino-acid biosynthesis; L-arginine biosynthesis; N(2)-acetyl-L-ornithine from L-glutamate: step 3/4.</text>
</comment>
<comment type="subcellular location">
    <subcellularLocation>
        <location evidence="1">Cytoplasm</location>
    </subcellularLocation>
</comment>
<comment type="similarity">
    <text evidence="1">Belongs to the NAGSA dehydrogenase family. Type 1 subfamily.</text>
</comment>
<proteinExistence type="inferred from homology"/>
<keyword id="KW-0028">Amino-acid biosynthesis</keyword>
<keyword id="KW-0055">Arginine biosynthesis</keyword>
<keyword id="KW-0963">Cytoplasm</keyword>
<keyword id="KW-0521">NADP</keyword>
<keyword id="KW-0560">Oxidoreductase</keyword>
<dbReference type="EC" id="1.2.1.38" evidence="1"/>
<dbReference type="EMBL" id="CP000227">
    <property type="protein sequence ID" value="ACM14350.1"/>
    <property type="molecule type" value="Genomic_DNA"/>
</dbReference>
<dbReference type="SMR" id="B9IXC9"/>
<dbReference type="KEGG" id="bcq:BCQ_3922"/>
<dbReference type="HOGENOM" id="CLU_006384_0_1_9"/>
<dbReference type="UniPathway" id="UPA00068">
    <property type="reaction ID" value="UER00108"/>
</dbReference>
<dbReference type="Proteomes" id="UP000000441">
    <property type="component" value="Chromosome"/>
</dbReference>
<dbReference type="GO" id="GO:0005737">
    <property type="term" value="C:cytoplasm"/>
    <property type="evidence" value="ECO:0007669"/>
    <property type="project" value="UniProtKB-SubCell"/>
</dbReference>
<dbReference type="GO" id="GO:0003942">
    <property type="term" value="F:N-acetyl-gamma-glutamyl-phosphate reductase activity"/>
    <property type="evidence" value="ECO:0007669"/>
    <property type="project" value="UniProtKB-UniRule"/>
</dbReference>
<dbReference type="GO" id="GO:0051287">
    <property type="term" value="F:NAD binding"/>
    <property type="evidence" value="ECO:0007669"/>
    <property type="project" value="InterPro"/>
</dbReference>
<dbReference type="GO" id="GO:0070401">
    <property type="term" value="F:NADP+ binding"/>
    <property type="evidence" value="ECO:0007669"/>
    <property type="project" value="InterPro"/>
</dbReference>
<dbReference type="GO" id="GO:0006526">
    <property type="term" value="P:L-arginine biosynthetic process"/>
    <property type="evidence" value="ECO:0007669"/>
    <property type="project" value="UniProtKB-UniRule"/>
</dbReference>
<dbReference type="CDD" id="cd23934">
    <property type="entry name" value="AGPR_1_C"/>
    <property type="match status" value="1"/>
</dbReference>
<dbReference type="CDD" id="cd17895">
    <property type="entry name" value="AGPR_1_N"/>
    <property type="match status" value="1"/>
</dbReference>
<dbReference type="FunFam" id="3.30.360.10:FF:000014">
    <property type="entry name" value="N-acetyl-gamma-glutamyl-phosphate reductase"/>
    <property type="match status" value="1"/>
</dbReference>
<dbReference type="FunFam" id="3.40.50.720:FF:000117">
    <property type="entry name" value="N-acetyl-gamma-glutamyl-phosphate reductase"/>
    <property type="match status" value="1"/>
</dbReference>
<dbReference type="Gene3D" id="3.30.360.10">
    <property type="entry name" value="Dihydrodipicolinate Reductase, domain 2"/>
    <property type="match status" value="1"/>
</dbReference>
<dbReference type="Gene3D" id="3.40.50.720">
    <property type="entry name" value="NAD(P)-binding Rossmann-like Domain"/>
    <property type="match status" value="1"/>
</dbReference>
<dbReference type="HAMAP" id="MF_00150">
    <property type="entry name" value="ArgC_type1"/>
    <property type="match status" value="1"/>
</dbReference>
<dbReference type="InterPro" id="IPR000706">
    <property type="entry name" value="AGPR_type-1"/>
</dbReference>
<dbReference type="InterPro" id="IPR036291">
    <property type="entry name" value="NAD(P)-bd_dom_sf"/>
</dbReference>
<dbReference type="InterPro" id="IPR050085">
    <property type="entry name" value="NAGSA_dehydrogenase"/>
</dbReference>
<dbReference type="InterPro" id="IPR000534">
    <property type="entry name" value="Semialdehyde_DH_NAD-bd"/>
</dbReference>
<dbReference type="NCBIfam" id="TIGR01850">
    <property type="entry name" value="argC"/>
    <property type="match status" value="1"/>
</dbReference>
<dbReference type="PANTHER" id="PTHR32338:SF10">
    <property type="entry name" value="N-ACETYL-GAMMA-GLUTAMYL-PHOSPHATE REDUCTASE, CHLOROPLASTIC-RELATED"/>
    <property type="match status" value="1"/>
</dbReference>
<dbReference type="PANTHER" id="PTHR32338">
    <property type="entry name" value="N-ACETYL-GAMMA-GLUTAMYL-PHOSPHATE REDUCTASE, CHLOROPLASTIC-RELATED-RELATED"/>
    <property type="match status" value="1"/>
</dbReference>
<dbReference type="Pfam" id="PF01118">
    <property type="entry name" value="Semialdhyde_dh"/>
    <property type="match status" value="1"/>
</dbReference>
<dbReference type="Pfam" id="PF22698">
    <property type="entry name" value="Semialdhyde_dhC_1"/>
    <property type="match status" value="1"/>
</dbReference>
<dbReference type="SMART" id="SM00859">
    <property type="entry name" value="Semialdhyde_dh"/>
    <property type="match status" value="1"/>
</dbReference>
<dbReference type="SUPFAM" id="SSF55347">
    <property type="entry name" value="Glyceraldehyde-3-phosphate dehydrogenase-like, C-terminal domain"/>
    <property type="match status" value="1"/>
</dbReference>
<dbReference type="SUPFAM" id="SSF51735">
    <property type="entry name" value="NAD(P)-binding Rossmann-fold domains"/>
    <property type="match status" value="1"/>
</dbReference>
<gene>
    <name evidence="1" type="primary">argC</name>
    <name type="ordered locus">BCQ_3922</name>
</gene>
<evidence type="ECO:0000255" key="1">
    <source>
        <dbReference type="HAMAP-Rule" id="MF_00150"/>
    </source>
</evidence>
<accession>B9IXC9</accession>
<reference key="1">
    <citation type="journal article" date="2009" name="J. Bacteriol.">
        <title>Complete genome sequence of the extremophilic Bacillus cereus strain Q1 with industrial applications.</title>
        <authorList>
            <person name="Xiong Z."/>
            <person name="Jiang Y."/>
            <person name="Qi D."/>
            <person name="Lu H."/>
            <person name="Yang F."/>
            <person name="Yang J."/>
            <person name="Chen L."/>
            <person name="Sun L."/>
            <person name="Xu X."/>
            <person name="Xue Y."/>
            <person name="Zhu Y."/>
            <person name="Jin Q."/>
        </authorList>
    </citation>
    <scope>NUCLEOTIDE SEQUENCE [LARGE SCALE GENOMIC DNA]</scope>
    <source>
        <strain>Q1</strain>
    </source>
</reference>